<feature type="chain" id="PRO_1000193011" description="Phosphoribosylformylglycinamidine cyclo-ligase">
    <location>
        <begin position="1"/>
        <end position="342"/>
    </location>
</feature>
<comment type="catalytic activity">
    <reaction evidence="1">
        <text>2-formamido-N(1)-(5-O-phospho-beta-D-ribosyl)acetamidine + ATP = 5-amino-1-(5-phospho-beta-D-ribosyl)imidazole + ADP + phosphate + H(+)</text>
        <dbReference type="Rhea" id="RHEA:23032"/>
        <dbReference type="ChEBI" id="CHEBI:15378"/>
        <dbReference type="ChEBI" id="CHEBI:30616"/>
        <dbReference type="ChEBI" id="CHEBI:43474"/>
        <dbReference type="ChEBI" id="CHEBI:137981"/>
        <dbReference type="ChEBI" id="CHEBI:147287"/>
        <dbReference type="ChEBI" id="CHEBI:456216"/>
        <dbReference type="EC" id="6.3.3.1"/>
    </reaction>
</comment>
<comment type="pathway">
    <text evidence="1">Purine metabolism; IMP biosynthesis via de novo pathway; 5-amino-1-(5-phospho-D-ribosyl)imidazole from N(2)-formyl-N(1)-(5-phospho-D-ribosyl)glycinamide: step 2/2.</text>
</comment>
<comment type="subcellular location">
    <subcellularLocation>
        <location evidence="1">Cytoplasm</location>
    </subcellularLocation>
</comment>
<comment type="similarity">
    <text evidence="1">Belongs to the AIR synthase family.</text>
</comment>
<keyword id="KW-0067">ATP-binding</keyword>
<keyword id="KW-0963">Cytoplasm</keyword>
<keyword id="KW-0436">Ligase</keyword>
<keyword id="KW-0547">Nucleotide-binding</keyword>
<keyword id="KW-0658">Purine biosynthesis</keyword>
<keyword id="KW-1185">Reference proteome</keyword>
<reference key="1">
    <citation type="journal article" date="2011" name="MBio">
        <title>Novel metabolic attributes of the genus Cyanothece, comprising a group of unicellular nitrogen-fixing Cyanobacteria.</title>
        <authorList>
            <person name="Bandyopadhyay A."/>
            <person name="Elvitigala T."/>
            <person name="Welsh E."/>
            <person name="Stockel J."/>
            <person name="Liberton M."/>
            <person name="Min H."/>
            <person name="Sherman L.A."/>
            <person name="Pakrasi H.B."/>
        </authorList>
    </citation>
    <scope>NUCLEOTIDE SEQUENCE [LARGE SCALE GENOMIC DNA]</scope>
    <source>
        <strain>PCC 7424</strain>
    </source>
</reference>
<evidence type="ECO:0000255" key="1">
    <source>
        <dbReference type="HAMAP-Rule" id="MF_00741"/>
    </source>
</evidence>
<gene>
    <name evidence="1" type="primary">purM</name>
    <name type="ordered locus">PCC7424_5338</name>
</gene>
<name>PUR5_GLOC7</name>
<proteinExistence type="inferred from homology"/>
<sequence length="342" mass="36461">MDYKEAGVDVEAGRNFVEKIKKKVESTHRPEVLGGLGGFGGFFQIPSGYQEPVLVSGTDGVGTKLKLAQGLNCHHTVGIDLVAMCVNDVLTSGAQPLFFLDYLATGQLNPQQLAEVVEGIVEGCHLSHCALLGGETAEMPGFYGVGEYDLAGFCVGIVEKSLLLDGSQVQIGDAVIGLASSGVHSNGFSLVRKIVETQGLSWDFCPDILEGKSLGEVLLTPTQIYVKPILEALSSNLKIHGMAHITGGGLPENLPRCLQANQSVQINPNSWEILPIFTWLAQAGQVSPSAMFNTFNMGIGFVVIVPVDQAETTLNWFNNKGIKAYQMGEVIEGTGHLVGLDF</sequence>
<protein>
    <recommendedName>
        <fullName evidence="1">Phosphoribosylformylglycinamidine cyclo-ligase</fullName>
        <ecNumber evidence="1">6.3.3.1</ecNumber>
    </recommendedName>
    <alternativeName>
        <fullName evidence="1">AIR synthase</fullName>
    </alternativeName>
    <alternativeName>
        <fullName evidence="1">AIRS</fullName>
    </alternativeName>
    <alternativeName>
        <fullName evidence="1">Phosphoribosyl-aminoimidazole synthetase</fullName>
    </alternativeName>
</protein>
<organism>
    <name type="scientific">Gloeothece citriformis (strain PCC 7424)</name>
    <name type="common">Cyanothece sp. (strain PCC 7424)</name>
    <dbReference type="NCBI Taxonomy" id="65393"/>
    <lineage>
        <taxon>Bacteria</taxon>
        <taxon>Bacillati</taxon>
        <taxon>Cyanobacteriota</taxon>
        <taxon>Cyanophyceae</taxon>
        <taxon>Oscillatoriophycideae</taxon>
        <taxon>Chroococcales</taxon>
        <taxon>Aphanothecaceae</taxon>
        <taxon>Gloeothece</taxon>
        <taxon>Gloeothece citriformis</taxon>
    </lineage>
</organism>
<dbReference type="EC" id="6.3.3.1" evidence="1"/>
<dbReference type="EMBL" id="CP001291">
    <property type="protein sequence ID" value="ACK73685.1"/>
    <property type="molecule type" value="Genomic_DNA"/>
</dbReference>
<dbReference type="RefSeq" id="WP_015957261.1">
    <property type="nucleotide sequence ID" value="NC_011729.1"/>
</dbReference>
<dbReference type="SMR" id="B7KJK8"/>
<dbReference type="STRING" id="65393.PCC7424_5338"/>
<dbReference type="KEGG" id="cyc:PCC7424_5338"/>
<dbReference type="eggNOG" id="COG0150">
    <property type="taxonomic scope" value="Bacteria"/>
</dbReference>
<dbReference type="HOGENOM" id="CLU_047116_0_0_3"/>
<dbReference type="OrthoDB" id="9802507at2"/>
<dbReference type="UniPathway" id="UPA00074">
    <property type="reaction ID" value="UER00129"/>
</dbReference>
<dbReference type="Proteomes" id="UP000002384">
    <property type="component" value="Chromosome"/>
</dbReference>
<dbReference type="GO" id="GO:0005829">
    <property type="term" value="C:cytosol"/>
    <property type="evidence" value="ECO:0007669"/>
    <property type="project" value="TreeGrafter"/>
</dbReference>
<dbReference type="GO" id="GO:0005524">
    <property type="term" value="F:ATP binding"/>
    <property type="evidence" value="ECO:0007669"/>
    <property type="project" value="UniProtKB-KW"/>
</dbReference>
<dbReference type="GO" id="GO:0004637">
    <property type="term" value="F:phosphoribosylamine-glycine ligase activity"/>
    <property type="evidence" value="ECO:0007669"/>
    <property type="project" value="TreeGrafter"/>
</dbReference>
<dbReference type="GO" id="GO:0004641">
    <property type="term" value="F:phosphoribosylformylglycinamidine cyclo-ligase activity"/>
    <property type="evidence" value="ECO:0007669"/>
    <property type="project" value="UniProtKB-UniRule"/>
</dbReference>
<dbReference type="GO" id="GO:0006189">
    <property type="term" value="P:'de novo' IMP biosynthetic process"/>
    <property type="evidence" value="ECO:0007669"/>
    <property type="project" value="UniProtKB-UniRule"/>
</dbReference>
<dbReference type="GO" id="GO:0046084">
    <property type="term" value="P:adenine biosynthetic process"/>
    <property type="evidence" value="ECO:0007669"/>
    <property type="project" value="TreeGrafter"/>
</dbReference>
<dbReference type="CDD" id="cd02196">
    <property type="entry name" value="PurM"/>
    <property type="match status" value="1"/>
</dbReference>
<dbReference type="FunFam" id="3.30.1330.10:FF:000001">
    <property type="entry name" value="Phosphoribosylformylglycinamidine cyclo-ligase"/>
    <property type="match status" value="1"/>
</dbReference>
<dbReference type="FunFam" id="3.90.650.10:FF:000011">
    <property type="entry name" value="Phosphoribosylformylglycinamidine cyclo-ligase"/>
    <property type="match status" value="1"/>
</dbReference>
<dbReference type="Gene3D" id="3.90.650.10">
    <property type="entry name" value="PurM-like C-terminal domain"/>
    <property type="match status" value="1"/>
</dbReference>
<dbReference type="Gene3D" id="3.30.1330.10">
    <property type="entry name" value="PurM-like, N-terminal domain"/>
    <property type="match status" value="1"/>
</dbReference>
<dbReference type="HAMAP" id="MF_00741">
    <property type="entry name" value="AIRS"/>
    <property type="match status" value="1"/>
</dbReference>
<dbReference type="InterPro" id="IPR010918">
    <property type="entry name" value="PurM-like_C_dom"/>
</dbReference>
<dbReference type="InterPro" id="IPR036676">
    <property type="entry name" value="PurM-like_C_sf"/>
</dbReference>
<dbReference type="InterPro" id="IPR016188">
    <property type="entry name" value="PurM-like_N"/>
</dbReference>
<dbReference type="InterPro" id="IPR036921">
    <property type="entry name" value="PurM-like_N_sf"/>
</dbReference>
<dbReference type="InterPro" id="IPR004733">
    <property type="entry name" value="PurM_cligase"/>
</dbReference>
<dbReference type="NCBIfam" id="TIGR00878">
    <property type="entry name" value="purM"/>
    <property type="match status" value="1"/>
</dbReference>
<dbReference type="PANTHER" id="PTHR10520:SF12">
    <property type="entry name" value="TRIFUNCTIONAL PURINE BIOSYNTHETIC PROTEIN ADENOSINE-3"/>
    <property type="match status" value="1"/>
</dbReference>
<dbReference type="PANTHER" id="PTHR10520">
    <property type="entry name" value="TRIFUNCTIONAL PURINE BIOSYNTHETIC PROTEIN ADENOSINE-3-RELATED"/>
    <property type="match status" value="1"/>
</dbReference>
<dbReference type="Pfam" id="PF00586">
    <property type="entry name" value="AIRS"/>
    <property type="match status" value="1"/>
</dbReference>
<dbReference type="Pfam" id="PF02769">
    <property type="entry name" value="AIRS_C"/>
    <property type="match status" value="1"/>
</dbReference>
<dbReference type="SUPFAM" id="SSF56042">
    <property type="entry name" value="PurM C-terminal domain-like"/>
    <property type="match status" value="1"/>
</dbReference>
<dbReference type="SUPFAM" id="SSF55326">
    <property type="entry name" value="PurM N-terminal domain-like"/>
    <property type="match status" value="1"/>
</dbReference>
<accession>B7KJK8</accession>